<sequence length="128" mass="14239">MKKMLVEFRDFALKGNVLDLAVAVVIGAAFGKIVSSLVDNIIMPLVGVLLGGLDFTDLSFKVGKSVIQYGAFIQSIVDFIIIAFAIFIFVKVLTSFIKKKEQTVEETPVPPTEEYLKEIRDLLKEQQK</sequence>
<protein>
    <recommendedName>
        <fullName evidence="1">Large-conductance mechanosensitive channel</fullName>
    </recommendedName>
</protein>
<proteinExistence type="inferred from homology"/>
<accession>B8DH65</accession>
<organism>
    <name type="scientific">Listeria monocytogenes serotype 4a (strain HCC23)</name>
    <dbReference type="NCBI Taxonomy" id="552536"/>
    <lineage>
        <taxon>Bacteria</taxon>
        <taxon>Bacillati</taxon>
        <taxon>Bacillota</taxon>
        <taxon>Bacilli</taxon>
        <taxon>Bacillales</taxon>
        <taxon>Listeriaceae</taxon>
        <taxon>Listeria</taxon>
    </lineage>
</organism>
<evidence type="ECO:0000255" key="1">
    <source>
        <dbReference type="HAMAP-Rule" id="MF_00115"/>
    </source>
</evidence>
<gene>
    <name evidence="1" type="primary">mscL</name>
    <name type="ordered locus">LMHCC_0496</name>
</gene>
<reference key="1">
    <citation type="journal article" date="2011" name="J. Bacteriol.">
        <title>Genome sequence of lineage III Listeria monocytogenes strain HCC23.</title>
        <authorList>
            <person name="Steele C.L."/>
            <person name="Donaldson J.R."/>
            <person name="Paul D."/>
            <person name="Banes M.M."/>
            <person name="Arick T."/>
            <person name="Bridges S.M."/>
            <person name="Lawrence M.L."/>
        </authorList>
    </citation>
    <scope>NUCLEOTIDE SEQUENCE [LARGE SCALE GENOMIC DNA]</scope>
    <source>
        <strain>HCC23</strain>
    </source>
</reference>
<name>MSCL_LISMH</name>
<comment type="function">
    <text evidence="1">Channel that opens in response to stretch forces in the membrane lipid bilayer. May participate in the regulation of osmotic pressure changes within the cell.</text>
</comment>
<comment type="subunit">
    <text evidence="1">Homopentamer.</text>
</comment>
<comment type="subcellular location">
    <subcellularLocation>
        <location evidence="1">Cell membrane</location>
        <topology evidence="1">Multi-pass membrane protein</topology>
    </subcellularLocation>
</comment>
<comment type="similarity">
    <text evidence="1">Belongs to the MscL family.</text>
</comment>
<feature type="chain" id="PRO_1000191376" description="Large-conductance mechanosensitive channel">
    <location>
        <begin position="1"/>
        <end position="128"/>
    </location>
</feature>
<feature type="transmembrane region" description="Helical" evidence="1">
    <location>
        <begin position="11"/>
        <end position="31"/>
    </location>
</feature>
<feature type="transmembrane region" description="Helical" evidence="1">
    <location>
        <begin position="70"/>
        <end position="90"/>
    </location>
</feature>
<dbReference type="EMBL" id="CP001175">
    <property type="protein sequence ID" value="ACK38853.1"/>
    <property type="molecule type" value="Genomic_DNA"/>
</dbReference>
<dbReference type="RefSeq" id="WP_003728855.1">
    <property type="nucleotide sequence ID" value="NC_011660.1"/>
</dbReference>
<dbReference type="SMR" id="B8DH65"/>
<dbReference type="KEGG" id="lmh:LMHCC_0496"/>
<dbReference type="HOGENOM" id="CLU_095787_0_0_9"/>
<dbReference type="GO" id="GO:0005886">
    <property type="term" value="C:plasma membrane"/>
    <property type="evidence" value="ECO:0007669"/>
    <property type="project" value="UniProtKB-SubCell"/>
</dbReference>
<dbReference type="GO" id="GO:0008381">
    <property type="term" value="F:mechanosensitive monoatomic ion channel activity"/>
    <property type="evidence" value="ECO:0007669"/>
    <property type="project" value="UniProtKB-UniRule"/>
</dbReference>
<dbReference type="FunFam" id="1.10.1200.120:FF:000003">
    <property type="entry name" value="Large-conductance mechanosensitive channel"/>
    <property type="match status" value="1"/>
</dbReference>
<dbReference type="Gene3D" id="1.10.1200.120">
    <property type="entry name" value="Large-conductance mechanosensitive channel, MscL, domain 1"/>
    <property type="match status" value="1"/>
</dbReference>
<dbReference type="HAMAP" id="MF_00115">
    <property type="entry name" value="MscL"/>
    <property type="match status" value="1"/>
</dbReference>
<dbReference type="InterPro" id="IPR019823">
    <property type="entry name" value="Mechanosensitive_channel_CS"/>
</dbReference>
<dbReference type="InterPro" id="IPR001185">
    <property type="entry name" value="MS_channel"/>
</dbReference>
<dbReference type="InterPro" id="IPR037673">
    <property type="entry name" value="MSC/AndL"/>
</dbReference>
<dbReference type="InterPro" id="IPR036019">
    <property type="entry name" value="MscL_channel"/>
</dbReference>
<dbReference type="NCBIfam" id="TIGR00220">
    <property type="entry name" value="mscL"/>
    <property type="match status" value="1"/>
</dbReference>
<dbReference type="NCBIfam" id="NF001843">
    <property type="entry name" value="PRK00567.1-4"/>
    <property type="match status" value="1"/>
</dbReference>
<dbReference type="NCBIfam" id="NF010558">
    <property type="entry name" value="PRK13953.1"/>
    <property type="match status" value="1"/>
</dbReference>
<dbReference type="PANTHER" id="PTHR30266:SF2">
    <property type="entry name" value="LARGE-CONDUCTANCE MECHANOSENSITIVE CHANNEL"/>
    <property type="match status" value="1"/>
</dbReference>
<dbReference type="PANTHER" id="PTHR30266">
    <property type="entry name" value="MECHANOSENSITIVE CHANNEL MSCL"/>
    <property type="match status" value="1"/>
</dbReference>
<dbReference type="Pfam" id="PF01741">
    <property type="entry name" value="MscL"/>
    <property type="match status" value="1"/>
</dbReference>
<dbReference type="PRINTS" id="PR01264">
    <property type="entry name" value="MECHCHANNEL"/>
</dbReference>
<dbReference type="SUPFAM" id="SSF81330">
    <property type="entry name" value="Gated mechanosensitive channel"/>
    <property type="match status" value="1"/>
</dbReference>
<dbReference type="PROSITE" id="PS01327">
    <property type="entry name" value="MSCL"/>
    <property type="match status" value="1"/>
</dbReference>
<keyword id="KW-1003">Cell membrane</keyword>
<keyword id="KW-0407">Ion channel</keyword>
<keyword id="KW-0406">Ion transport</keyword>
<keyword id="KW-0472">Membrane</keyword>
<keyword id="KW-0812">Transmembrane</keyword>
<keyword id="KW-1133">Transmembrane helix</keyword>
<keyword id="KW-0813">Transport</keyword>